<proteinExistence type="inferred from homology"/>
<gene>
    <name type="primary">OPG029</name>
    <name type="synonym">B16L</name>
    <name type="synonym">C6L</name>
    <name type="synonym">D12L</name>
    <name type="synonym">D9L</name>
</gene>
<accession>P0DSX4</accession>
<accession>P34014</accession>
<name>PG029_VARV</name>
<dbReference type="EMBL" id="L22579">
    <property type="protein sequence ID" value="AAA60757.1"/>
    <property type="molecule type" value="Genomic_DNA"/>
</dbReference>
<dbReference type="EMBL" id="U18338">
    <property type="protein sequence ID" value="AAA69355.1"/>
    <property type="molecule type" value="Genomic_DNA"/>
</dbReference>
<dbReference type="PIR" id="G72151">
    <property type="entry name" value="G72151"/>
</dbReference>
<dbReference type="PIR" id="T28447">
    <property type="entry name" value="T28447"/>
</dbReference>
<dbReference type="RefSeq" id="NP_042053.1">
    <property type="nucleotide sequence ID" value="NC_001611.1"/>
</dbReference>
<dbReference type="SMR" id="P0DSX4"/>
<dbReference type="GeneID" id="1486404"/>
<dbReference type="KEGG" id="vg:1486404"/>
<dbReference type="Proteomes" id="UP000119805">
    <property type="component" value="Segment"/>
</dbReference>
<dbReference type="FunFam" id="1.10.437.20:FF:000002">
    <property type="entry name" value="Protein C6"/>
    <property type="match status" value="1"/>
</dbReference>
<dbReference type="Gene3D" id="1.10.437.20">
    <property type="entry name" value="dsDNA poxvirus"/>
    <property type="match status" value="1"/>
</dbReference>
<dbReference type="InterPro" id="IPR022819">
    <property type="entry name" value="Poxvirus_Bcl-2-like"/>
</dbReference>
<dbReference type="InterPro" id="IPR043018">
    <property type="entry name" value="Poxvirus_sf"/>
</dbReference>
<dbReference type="Pfam" id="PF06227">
    <property type="entry name" value="Poxv_Bcl-2-like"/>
    <property type="match status" value="1"/>
</dbReference>
<organismHost>
    <name type="scientific">Homo sapiens</name>
    <name type="common">Human</name>
    <dbReference type="NCBI Taxonomy" id="9606"/>
</organismHost>
<sequence>MNVYNKADSFSLESDSIKDVIHDYICWLSMTDEMRPSIGNVFKAMETFKIDAVRYYDGNIYDLAKDINAMSFDSFIRSLQNISSKKDKLTVYGTMGLLSIVVDINKGCDISNIKFAAGIIILMEYIFDNTDMSHLKVALYRRIQRRYPIDDDEEDR</sequence>
<comment type="function">
    <text evidence="1">Prevents establishment of cellular antiviral state by blocking virus-induced phosphorylation and activation of interferon regulatory factors 3/IRF3 and 7/IRF7, transcription factors critical for the induction of interferons alpha and beta. This blockage is produced through the inhibition of host TBK1, by binding host TBK1 adapter proteins TBKBP1 and AZI2, thereby producing a strong inhibition of the phosphorylation and activation of IRF3 and IRF7. Also acts as an inhibitor of the cellular response to type I IFN by interacting with host STAT2. Mechanistically, exerts its inhibitory effect after host ISGF3 complex (composed of STAT1, STAT2 and IRF9) binding to the interferon stimulated response element (ISRE).</text>
</comment>
<comment type="subunit">
    <text evidence="1">Interacts with host TANK, TBKBP1 and AZI2; these interactions prevent interferon production. Interacts with host STAT2.</text>
</comment>
<comment type="induction">
    <text evidence="1">Expressed in the early phase of the viral replicative cycle.</text>
</comment>
<comment type="similarity">
    <text evidence="2">Belongs to the orthopoxvirus OPG029 family.</text>
</comment>
<keyword id="KW-0244">Early protein</keyword>
<protein>
    <recommendedName>
        <fullName>IFN signaling evasion protein OPG029</fullName>
    </recommendedName>
</protein>
<organism>
    <name type="scientific">Variola virus</name>
    <dbReference type="NCBI Taxonomy" id="10255"/>
    <lineage>
        <taxon>Viruses</taxon>
        <taxon>Varidnaviria</taxon>
        <taxon>Bamfordvirae</taxon>
        <taxon>Nucleocytoviricota</taxon>
        <taxon>Pokkesviricetes</taxon>
        <taxon>Chitovirales</taxon>
        <taxon>Poxviridae</taxon>
        <taxon>Chordopoxvirinae</taxon>
        <taxon>Orthopoxvirus</taxon>
    </lineage>
</organism>
<feature type="chain" id="PRO_0000448174" description="IFN signaling evasion protein OPG029">
    <location>
        <begin position="1"/>
        <end position="156"/>
    </location>
</feature>
<reference key="1">
    <citation type="journal article" date="1993" name="Nature">
        <title>Potential virulence determinants in terminal regions of variola smallpox virus genome.</title>
        <authorList>
            <person name="Massung R.F."/>
            <person name="Esposito J.J."/>
            <person name="Liu L.I."/>
            <person name="Qi J."/>
            <person name="Utterback T.R."/>
            <person name="Knight J.C."/>
            <person name="Aubin L."/>
            <person name="Yuran T.E."/>
            <person name="Parsons J.M."/>
            <person name="Loparev V.N."/>
            <person name="Selivanov N.A."/>
            <person name="Cavallaro K.F."/>
            <person name="Kerlavage A.R."/>
            <person name="Mahy B.W.J."/>
            <person name="Venter J.C."/>
        </authorList>
    </citation>
    <scope>NUCLEOTIDE SEQUENCE [GENOMIC DNA]</scope>
    <source>
        <strain>Bangladesh-1975</strain>
    </source>
</reference>
<reference key="2">
    <citation type="submission" date="1994-12" db="EMBL/GenBank/DDBJ databases">
        <authorList>
            <person name="Massung R.F."/>
            <person name="Loparev V.N."/>
            <person name="Knight J.C."/>
            <person name="Chizhikov V.E."/>
            <person name="Parsons J.M."/>
            <person name="Totmenin A.V."/>
            <person name="Shchelkunov S.N."/>
            <person name="Esposito J.J."/>
        </authorList>
    </citation>
    <scope>NUCLEOTIDE SEQUENCE [GENOMIC DNA]</scope>
    <source>
        <strain>Garcia-1966</strain>
    </source>
</reference>
<evidence type="ECO:0000250" key="1">
    <source>
        <dbReference type="UniProtKB" id="P17362"/>
    </source>
</evidence>
<evidence type="ECO:0000305" key="2"/>